<protein>
    <recommendedName>
        <fullName>Histone H4</fullName>
    </recommendedName>
</protein>
<proteinExistence type="inferred from homology"/>
<organism>
    <name type="scientific">Acropora formosa</name>
    <name type="common">Staghorn coral</name>
    <dbReference type="NCBI Taxonomy" id="126732"/>
    <lineage>
        <taxon>Eukaryota</taxon>
        <taxon>Metazoa</taxon>
        <taxon>Cnidaria</taxon>
        <taxon>Anthozoa</taxon>
        <taxon>Hexacorallia</taxon>
        <taxon>Scleractinia</taxon>
        <taxon>Astrocoeniina</taxon>
        <taxon>Acroporidae</taxon>
        <taxon>Acropora</taxon>
    </lineage>
</organism>
<name>H4_ACRFO</name>
<evidence type="ECO:0000250" key="1"/>
<evidence type="ECO:0000250" key="2">
    <source>
        <dbReference type="UniProtKB" id="P62805"/>
    </source>
</evidence>
<evidence type="ECO:0000256" key="3">
    <source>
        <dbReference type="SAM" id="MobiDB-lite"/>
    </source>
</evidence>
<evidence type="ECO:0000305" key="4"/>
<dbReference type="EMBL" id="L11067">
    <property type="protein sequence ID" value="AAC37355.1"/>
    <property type="molecule type" value="Genomic_DNA"/>
</dbReference>
<dbReference type="EMBL" id="S67324">
    <property type="protein sequence ID" value="AAB28739.1"/>
    <property type="molecule type" value="Genomic_DNA"/>
</dbReference>
<dbReference type="SMR" id="P35059"/>
<dbReference type="GO" id="GO:0000786">
    <property type="term" value="C:nucleosome"/>
    <property type="evidence" value="ECO:0007669"/>
    <property type="project" value="UniProtKB-KW"/>
</dbReference>
<dbReference type="GO" id="GO:0005634">
    <property type="term" value="C:nucleus"/>
    <property type="evidence" value="ECO:0007669"/>
    <property type="project" value="UniProtKB-SubCell"/>
</dbReference>
<dbReference type="GO" id="GO:0003677">
    <property type="term" value="F:DNA binding"/>
    <property type="evidence" value="ECO:0007669"/>
    <property type="project" value="UniProtKB-KW"/>
</dbReference>
<dbReference type="GO" id="GO:0046982">
    <property type="term" value="F:protein heterodimerization activity"/>
    <property type="evidence" value="ECO:0007669"/>
    <property type="project" value="InterPro"/>
</dbReference>
<dbReference type="GO" id="GO:0030527">
    <property type="term" value="F:structural constituent of chromatin"/>
    <property type="evidence" value="ECO:0007669"/>
    <property type="project" value="InterPro"/>
</dbReference>
<dbReference type="CDD" id="cd22912">
    <property type="entry name" value="HFD_H4"/>
    <property type="match status" value="1"/>
</dbReference>
<dbReference type="FunFam" id="1.10.20.10:FF:000002">
    <property type="entry name" value="Histone H4"/>
    <property type="match status" value="1"/>
</dbReference>
<dbReference type="Gene3D" id="1.10.20.10">
    <property type="entry name" value="Histone, subunit A"/>
    <property type="match status" value="1"/>
</dbReference>
<dbReference type="InterPro" id="IPR035425">
    <property type="entry name" value="CENP-T/H4_C"/>
</dbReference>
<dbReference type="InterPro" id="IPR009072">
    <property type="entry name" value="Histone-fold"/>
</dbReference>
<dbReference type="InterPro" id="IPR001951">
    <property type="entry name" value="Histone_H4"/>
</dbReference>
<dbReference type="InterPro" id="IPR019809">
    <property type="entry name" value="Histone_H4_CS"/>
</dbReference>
<dbReference type="InterPro" id="IPR004823">
    <property type="entry name" value="TAF_TATA-bd_Histone-like_dom"/>
</dbReference>
<dbReference type="PANTHER" id="PTHR10484">
    <property type="entry name" value="HISTONE H4"/>
    <property type="match status" value="1"/>
</dbReference>
<dbReference type="Pfam" id="PF15511">
    <property type="entry name" value="CENP-T_C"/>
    <property type="match status" value="1"/>
</dbReference>
<dbReference type="PRINTS" id="PR00623">
    <property type="entry name" value="HISTONEH4"/>
</dbReference>
<dbReference type="SMART" id="SM00417">
    <property type="entry name" value="H4"/>
    <property type="match status" value="1"/>
</dbReference>
<dbReference type="SMART" id="SM00803">
    <property type="entry name" value="TAF"/>
    <property type="match status" value="1"/>
</dbReference>
<dbReference type="SUPFAM" id="SSF47113">
    <property type="entry name" value="Histone-fold"/>
    <property type="match status" value="1"/>
</dbReference>
<dbReference type="PROSITE" id="PS00047">
    <property type="entry name" value="HISTONE_H4"/>
    <property type="match status" value="1"/>
</dbReference>
<comment type="function">
    <text>Core component of nucleosome. Nucleosomes wrap and compact DNA into chromatin, limiting DNA accessibility to the cellular machineries which require DNA as a template. Histones thereby play a central role in transcription regulation, DNA repair, DNA replication and chromosomal stability. DNA accessibility is regulated via a complex set of post-translational modifications of histones, also called histone code, and nucleosome remodeling.</text>
</comment>
<comment type="subunit">
    <text>The nucleosome is a histone octamer containing two molecules each of H2A, H2B, H3 and H4 assembled in one H3-H4 heterotetramer and two H2A-H2B heterodimers. The octamer wraps approximately 147 bp of DNA.</text>
</comment>
<comment type="subcellular location">
    <subcellularLocation>
        <location evidence="1">Nucleus</location>
    </subcellularLocation>
    <subcellularLocation>
        <location evidence="1">Chromosome</location>
    </subcellularLocation>
</comment>
<comment type="similarity">
    <text evidence="4">Belongs to the histone H4 family.</text>
</comment>
<feature type="initiator methionine" description="Removed" evidence="1">
    <location>
        <position position="1"/>
    </location>
</feature>
<feature type="chain" id="PRO_0000158274" description="Histone H4">
    <location>
        <begin position="2"/>
        <end position="103"/>
    </location>
</feature>
<feature type="DNA-binding region">
    <location>
        <begin position="17"/>
        <end position="21"/>
    </location>
</feature>
<feature type="region of interest" description="Disordered" evidence="3">
    <location>
        <begin position="1"/>
        <end position="20"/>
    </location>
</feature>
<feature type="compositionally biased region" description="Gly residues" evidence="3">
    <location>
        <begin position="1"/>
        <end position="14"/>
    </location>
</feature>
<feature type="modified residue" description="N-acetylserine" evidence="1">
    <location>
        <position position="2"/>
    </location>
</feature>
<feature type="modified residue" description="N6-acetyl-N6-methyllysine; alternate" evidence="2">
    <location>
        <position position="6"/>
    </location>
</feature>
<feature type="modified residue" description="N6-acetyl-N6-methyllysine; alternate" evidence="2">
    <location>
        <position position="13"/>
    </location>
</feature>
<feature type="modified residue" description="N6-acetyllysine" evidence="1">
    <location>
        <position position="17"/>
    </location>
</feature>
<feature type="modified residue" description="N6-methyllysine" evidence="1">
    <location>
        <position position="21"/>
    </location>
</feature>
<sequence>MSGRGKGGKGLGKGGAKRHRKILRDNIQGITKPAIRRLARRGGVKRISGLIYEETRGVLKVFLENVIRDAVTYTEHAKRKTVTAMDVVYALKRQGRTLYGFGG</sequence>
<reference key="1">
    <citation type="journal article" date="1993" name="J. Mol. Evol.">
        <title>Nucleotide sequence of the histone gene cluster in the coral Acropora formosa (Cnidaria; Scleractinia): features of histone gene structure and organization are common to diploblastic and triploblastic metazoans.</title>
        <authorList>
            <person name="Miller D.J."/>
            <person name="Harrison P.L."/>
            <person name="Mahony T.J."/>
            <person name="McMillan J.P."/>
            <person name="Miles A."/>
            <person name="Odorico D.M."/>
            <person name="ten Lohuis M.R."/>
        </authorList>
    </citation>
    <scope>NUCLEOTIDE SEQUENCE [GENOMIC DNA]</scope>
</reference>
<accession>P35059</accession>
<keyword id="KW-0007">Acetylation</keyword>
<keyword id="KW-0158">Chromosome</keyword>
<keyword id="KW-0238">DNA-binding</keyword>
<keyword id="KW-0488">Methylation</keyword>
<keyword id="KW-0544">Nucleosome core</keyword>
<keyword id="KW-0539">Nucleus</keyword>